<dbReference type="EC" id="2.7.4.22" evidence="1"/>
<dbReference type="EMBL" id="BA000019">
    <property type="protein sequence ID" value="BAB73164.1"/>
    <property type="molecule type" value="Genomic_DNA"/>
</dbReference>
<dbReference type="PIR" id="AD1957">
    <property type="entry name" value="AD1957"/>
</dbReference>
<dbReference type="RefSeq" id="WP_010995380.1">
    <property type="nucleotide sequence ID" value="NZ_RSCN01000008.1"/>
</dbReference>
<dbReference type="SMR" id="Q8YXK5"/>
<dbReference type="STRING" id="103690.gene:10493221"/>
<dbReference type="DNASU" id="1104802"/>
<dbReference type="KEGG" id="ana:alr1207"/>
<dbReference type="eggNOG" id="COG0528">
    <property type="taxonomic scope" value="Bacteria"/>
</dbReference>
<dbReference type="OrthoDB" id="9807458at2"/>
<dbReference type="UniPathway" id="UPA00159">
    <property type="reaction ID" value="UER00275"/>
</dbReference>
<dbReference type="Proteomes" id="UP000002483">
    <property type="component" value="Chromosome"/>
</dbReference>
<dbReference type="GO" id="GO:0005737">
    <property type="term" value="C:cytoplasm"/>
    <property type="evidence" value="ECO:0007669"/>
    <property type="project" value="UniProtKB-SubCell"/>
</dbReference>
<dbReference type="GO" id="GO:0005524">
    <property type="term" value="F:ATP binding"/>
    <property type="evidence" value="ECO:0007669"/>
    <property type="project" value="UniProtKB-KW"/>
</dbReference>
<dbReference type="GO" id="GO:0033862">
    <property type="term" value="F:UMP kinase activity"/>
    <property type="evidence" value="ECO:0007669"/>
    <property type="project" value="UniProtKB-EC"/>
</dbReference>
<dbReference type="GO" id="GO:0044210">
    <property type="term" value="P:'de novo' CTP biosynthetic process"/>
    <property type="evidence" value="ECO:0007669"/>
    <property type="project" value="UniProtKB-UniRule"/>
</dbReference>
<dbReference type="GO" id="GO:0006225">
    <property type="term" value="P:UDP biosynthetic process"/>
    <property type="evidence" value="ECO:0007669"/>
    <property type="project" value="TreeGrafter"/>
</dbReference>
<dbReference type="CDD" id="cd04254">
    <property type="entry name" value="AAK_UMPK-PyrH-Ec"/>
    <property type="match status" value="1"/>
</dbReference>
<dbReference type="FunFam" id="3.40.1160.10:FF:000001">
    <property type="entry name" value="Uridylate kinase"/>
    <property type="match status" value="1"/>
</dbReference>
<dbReference type="Gene3D" id="3.40.1160.10">
    <property type="entry name" value="Acetylglutamate kinase-like"/>
    <property type="match status" value="1"/>
</dbReference>
<dbReference type="HAMAP" id="MF_01220_B">
    <property type="entry name" value="PyrH_B"/>
    <property type="match status" value="1"/>
</dbReference>
<dbReference type="InterPro" id="IPR036393">
    <property type="entry name" value="AceGlu_kinase-like_sf"/>
</dbReference>
<dbReference type="InterPro" id="IPR001048">
    <property type="entry name" value="Asp/Glu/Uridylate_kinase"/>
</dbReference>
<dbReference type="InterPro" id="IPR011817">
    <property type="entry name" value="Uridylate_kinase"/>
</dbReference>
<dbReference type="InterPro" id="IPR015963">
    <property type="entry name" value="Uridylate_kinase_bac"/>
</dbReference>
<dbReference type="NCBIfam" id="TIGR02075">
    <property type="entry name" value="pyrH_bact"/>
    <property type="match status" value="1"/>
</dbReference>
<dbReference type="PANTHER" id="PTHR42833">
    <property type="entry name" value="URIDYLATE KINASE"/>
    <property type="match status" value="1"/>
</dbReference>
<dbReference type="PANTHER" id="PTHR42833:SF4">
    <property type="entry name" value="URIDYLATE KINASE PUMPKIN, CHLOROPLASTIC"/>
    <property type="match status" value="1"/>
</dbReference>
<dbReference type="Pfam" id="PF00696">
    <property type="entry name" value="AA_kinase"/>
    <property type="match status" value="1"/>
</dbReference>
<dbReference type="PIRSF" id="PIRSF005650">
    <property type="entry name" value="Uridylate_kin"/>
    <property type="match status" value="1"/>
</dbReference>
<dbReference type="SUPFAM" id="SSF53633">
    <property type="entry name" value="Carbamate kinase-like"/>
    <property type="match status" value="1"/>
</dbReference>
<keyword id="KW-0021">Allosteric enzyme</keyword>
<keyword id="KW-0067">ATP-binding</keyword>
<keyword id="KW-0963">Cytoplasm</keyword>
<keyword id="KW-0418">Kinase</keyword>
<keyword id="KW-0547">Nucleotide-binding</keyword>
<keyword id="KW-0665">Pyrimidine biosynthesis</keyword>
<keyword id="KW-1185">Reference proteome</keyword>
<keyword id="KW-0808">Transferase</keyword>
<reference key="1">
    <citation type="journal article" date="2001" name="DNA Res.">
        <title>Complete genomic sequence of the filamentous nitrogen-fixing cyanobacterium Anabaena sp. strain PCC 7120.</title>
        <authorList>
            <person name="Kaneko T."/>
            <person name="Nakamura Y."/>
            <person name="Wolk C.P."/>
            <person name="Kuritz T."/>
            <person name="Sasamoto S."/>
            <person name="Watanabe A."/>
            <person name="Iriguchi M."/>
            <person name="Ishikawa A."/>
            <person name="Kawashima K."/>
            <person name="Kimura T."/>
            <person name="Kishida Y."/>
            <person name="Kohara M."/>
            <person name="Matsumoto M."/>
            <person name="Matsuno A."/>
            <person name="Muraki A."/>
            <person name="Nakazaki N."/>
            <person name="Shimpo S."/>
            <person name="Sugimoto M."/>
            <person name="Takazawa M."/>
            <person name="Yamada M."/>
            <person name="Yasuda M."/>
            <person name="Tabata S."/>
        </authorList>
    </citation>
    <scope>NUCLEOTIDE SEQUENCE [LARGE SCALE GENOMIC DNA]</scope>
    <source>
        <strain>PCC 7120 / SAG 25.82 / UTEX 2576</strain>
    </source>
</reference>
<sequence>MGTNYRRVLLKLSGEALMGNMGYGIDPEVVKEIAQEIAEVIATGVQIAIVVGGGNIFRGVKAASAGMDRATADYIGMIATVMNAMTLQDSLERIGVQTRVQTAIAMQELAEPYIRRRAIRHLEKGRVVIFGAGSGNPFFTTDTTAALRAAEIDAEVIFKATKVDGVYDADPEIYPNAKRYNSLTYAHVLAQDLRVMDSTAIALCKENNIPILVFDLTTRGNIRRAVLGESIGTLVGGSCEIS</sequence>
<name>PYRH_NOSS1</name>
<proteinExistence type="inferred from homology"/>
<evidence type="ECO:0000255" key="1">
    <source>
        <dbReference type="HAMAP-Rule" id="MF_01220"/>
    </source>
</evidence>
<comment type="function">
    <text evidence="1">Catalyzes the reversible phosphorylation of UMP to UDP.</text>
</comment>
<comment type="catalytic activity">
    <reaction evidence="1">
        <text>UMP + ATP = UDP + ADP</text>
        <dbReference type="Rhea" id="RHEA:24400"/>
        <dbReference type="ChEBI" id="CHEBI:30616"/>
        <dbReference type="ChEBI" id="CHEBI:57865"/>
        <dbReference type="ChEBI" id="CHEBI:58223"/>
        <dbReference type="ChEBI" id="CHEBI:456216"/>
        <dbReference type="EC" id="2.7.4.22"/>
    </reaction>
</comment>
<comment type="activity regulation">
    <text evidence="1">Allosterically activated by GTP. Inhibited by UTP.</text>
</comment>
<comment type="pathway">
    <text evidence="1">Pyrimidine metabolism; CTP biosynthesis via de novo pathway; UDP from UMP (UMPK route): step 1/1.</text>
</comment>
<comment type="subunit">
    <text evidence="1">Homohexamer.</text>
</comment>
<comment type="subcellular location">
    <subcellularLocation>
        <location evidence="1">Cytoplasm</location>
    </subcellularLocation>
</comment>
<comment type="similarity">
    <text evidence="1">Belongs to the UMP kinase family.</text>
</comment>
<accession>Q8YXK5</accession>
<organism>
    <name type="scientific">Nostoc sp. (strain PCC 7120 / SAG 25.82 / UTEX 2576)</name>
    <dbReference type="NCBI Taxonomy" id="103690"/>
    <lineage>
        <taxon>Bacteria</taxon>
        <taxon>Bacillati</taxon>
        <taxon>Cyanobacteriota</taxon>
        <taxon>Cyanophyceae</taxon>
        <taxon>Nostocales</taxon>
        <taxon>Nostocaceae</taxon>
        <taxon>Nostoc</taxon>
    </lineage>
</organism>
<gene>
    <name evidence="1" type="primary">pyrH</name>
    <name type="ordered locus">alr1207</name>
</gene>
<protein>
    <recommendedName>
        <fullName evidence="1">Uridylate kinase</fullName>
        <shortName evidence="1">UK</shortName>
        <ecNumber evidence="1">2.7.4.22</ecNumber>
    </recommendedName>
    <alternativeName>
        <fullName evidence="1">Uridine monophosphate kinase</fullName>
        <shortName evidence="1">UMP kinase</shortName>
        <shortName evidence="1">UMPK</shortName>
    </alternativeName>
</protein>
<feature type="chain" id="PRO_0000143820" description="Uridylate kinase">
    <location>
        <begin position="1"/>
        <end position="242"/>
    </location>
</feature>
<feature type="region of interest" description="Involved in allosteric activation by GTP" evidence="1">
    <location>
        <begin position="19"/>
        <end position="24"/>
    </location>
</feature>
<feature type="binding site" evidence="1">
    <location>
        <begin position="11"/>
        <end position="14"/>
    </location>
    <ligand>
        <name>ATP</name>
        <dbReference type="ChEBI" id="CHEBI:30616"/>
    </ligand>
</feature>
<feature type="binding site" evidence="1">
    <location>
        <position position="53"/>
    </location>
    <ligand>
        <name>UMP</name>
        <dbReference type="ChEBI" id="CHEBI:57865"/>
    </ligand>
</feature>
<feature type="binding site" evidence="1">
    <location>
        <position position="54"/>
    </location>
    <ligand>
        <name>ATP</name>
        <dbReference type="ChEBI" id="CHEBI:30616"/>
    </ligand>
</feature>
<feature type="binding site" evidence="1">
    <location>
        <position position="58"/>
    </location>
    <ligand>
        <name>ATP</name>
        <dbReference type="ChEBI" id="CHEBI:30616"/>
    </ligand>
</feature>
<feature type="binding site" evidence="1">
    <location>
        <position position="73"/>
    </location>
    <ligand>
        <name>UMP</name>
        <dbReference type="ChEBI" id="CHEBI:57865"/>
    </ligand>
</feature>
<feature type="binding site" evidence="1">
    <location>
        <begin position="134"/>
        <end position="141"/>
    </location>
    <ligand>
        <name>UMP</name>
        <dbReference type="ChEBI" id="CHEBI:57865"/>
    </ligand>
</feature>
<feature type="binding site" evidence="1">
    <location>
        <position position="161"/>
    </location>
    <ligand>
        <name>ATP</name>
        <dbReference type="ChEBI" id="CHEBI:30616"/>
    </ligand>
</feature>
<feature type="binding site" evidence="1">
    <location>
        <position position="167"/>
    </location>
    <ligand>
        <name>ATP</name>
        <dbReference type="ChEBI" id="CHEBI:30616"/>
    </ligand>
</feature>
<feature type="binding site" evidence="1">
    <location>
        <position position="170"/>
    </location>
    <ligand>
        <name>ATP</name>
        <dbReference type="ChEBI" id="CHEBI:30616"/>
    </ligand>
</feature>